<evidence type="ECO:0000250" key="1"/>
<evidence type="ECO:0000250" key="2">
    <source>
        <dbReference type="UniProtKB" id="Q13009"/>
    </source>
</evidence>
<evidence type="ECO:0000255" key="3"/>
<evidence type="ECO:0000255" key="4">
    <source>
        <dbReference type="PROSITE-ProRule" id="PRU00062"/>
    </source>
</evidence>
<evidence type="ECO:0000255" key="5">
    <source>
        <dbReference type="PROSITE-ProRule" id="PRU00143"/>
    </source>
</evidence>
<evidence type="ECO:0000255" key="6">
    <source>
        <dbReference type="PROSITE-ProRule" id="PRU00145"/>
    </source>
</evidence>
<evidence type="ECO:0000255" key="7">
    <source>
        <dbReference type="PROSITE-ProRule" id="PRU00262"/>
    </source>
</evidence>
<evidence type="ECO:0000256" key="8">
    <source>
        <dbReference type="SAM" id="MobiDB-lite"/>
    </source>
</evidence>
<evidence type="ECO:0000269" key="9">
    <source>
    </source>
</evidence>
<evidence type="ECO:0000269" key="10">
    <source>
    </source>
</evidence>
<evidence type="ECO:0000269" key="11">
    <source>
    </source>
</evidence>
<evidence type="ECO:0000269" key="12">
    <source>
    </source>
</evidence>
<evidence type="ECO:0000269" key="13">
    <source>
    </source>
</evidence>
<evidence type="ECO:0000303" key="14">
    <source>
    </source>
</evidence>
<evidence type="ECO:0000305" key="15"/>
<evidence type="ECO:0000305" key="16">
    <source>
    </source>
</evidence>
<evidence type="ECO:0000312" key="17">
    <source>
        <dbReference type="MGI" id="MGI:103306"/>
    </source>
</evidence>
<evidence type="ECO:0007744" key="18">
    <source>
    </source>
</evidence>
<evidence type="ECO:0007744" key="19">
    <source>
    </source>
</evidence>
<evidence type="ECO:0007744" key="20">
    <source>
    </source>
</evidence>
<evidence type="ECO:0007829" key="21">
    <source>
        <dbReference type="PDB" id="1FOE"/>
    </source>
</evidence>
<evidence type="ECO:0007829" key="22">
    <source>
        <dbReference type="PDB" id="7UIR"/>
    </source>
</evidence>
<gene>
    <name evidence="17" type="primary">Tiam1</name>
    <name evidence="14" type="synonym">Tiam-1</name>
</gene>
<feature type="initiator methionine" description="Removed" evidence="3">
    <location>
        <position position="1"/>
    </location>
</feature>
<feature type="chain" id="PRO_0000080977" description="Rho guanine nucleotide exchange factor TIAM1">
    <location>
        <begin position="2"/>
        <end position="1591"/>
    </location>
</feature>
<feature type="domain" description="PH 1" evidence="6">
    <location>
        <begin position="434"/>
        <end position="549"/>
    </location>
</feature>
<feature type="domain" description="RBD" evidence="7">
    <location>
        <begin position="765"/>
        <end position="832"/>
    </location>
</feature>
<feature type="domain" description="PDZ" evidence="5">
    <location>
        <begin position="845"/>
        <end position="908"/>
    </location>
</feature>
<feature type="domain" description="DH" evidence="4">
    <location>
        <begin position="1040"/>
        <end position="1234"/>
    </location>
</feature>
<feature type="domain" description="PH 2" evidence="6">
    <location>
        <begin position="1261"/>
        <end position="1397"/>
    </location>
</feature>
<feature type="region of interest" description="Disordered" evidence="8">
    <location>
        <begin position="1"/>
        <end position="70"/>
    </location>
</feature>
<feature type="region of interest" description="Disordered" evidence="8">
    <location>
        <begin position="305"/>
        <end position="380"/>
    </location>
</feature>
<feature type="region of interest" description="Disordered" evidence="8">
    <location>
        <begin position="393"/>
        <end position="422"/>
    </location>
</feature>
<feature type="region of interest" description="Disordered" evidence="8">
    <location>
        <begin position="933"/>
        <end position="1034"/>
    </location>
</feature>
<feature type="region of interest" description="Disordered" evidence="8">
    <location>
        <begin position="1456"/>
        <end position="1481"/>
    </location>
</feature>
<feature type="compositionally biased region" description="Basic and acidic residues" evidence="8">
    <location>
        <begin position="8"/>
        <end position="19"/>
    </location>
</feature>
<feature type="compositionally biased region" description="Basic residues" evidence="8">
    <location>
        <begin position="20"/>
        <end position="49"/>
    </location>
</feature>
<feature type="compositionally biased region" description="Low complexity" evidence="8">
    <location>
        <begin position="53"/>
        <end position="67"/>
    </location>
</feature>
<feature type="compositionally biased region" description="Polar residues" evidence="8">
    <location>
        <begin position="340"/>
        <end position="359"/>
    </location>
</feature>
<feature type="compositionally biased region" description="Low complexity" evidence="8">
    <location>
        <begin position="367"/>
        <end position="376"/>
    </location>
</feature>
<feature type="compositionally biased region" description="Polar residues" evidence="8">
    <location>
        <begin position="412"/>
        <end position="422"/>
    </location>
</feature>
<feature type="compositionally biased region" description="Polar residues" evidence="8">
    <location>
        <begin position="958"/>
        <end position="975"/>
    </location>
</feature>
<feature type="compositionally biased region" description="Acidic residues" evidence="8">
    <location>
        <begin position="977"/>
        <end position="990"/>
    </location>
</feature>
<feature type="compositionally biased region" description="Low complexity" evidence="8">
    <location>
        <begin position="1014"/>
        <end position="1028"/>
    </location>
</feature>
<feature type="modified residue" description="Phosphoserine" evidence="18 20">
    <location>
        <position position="231"/>
    </location>
</feature>
<feature type="modified residue" description="Phosphoserine" evidence="20">
    <location>
        <position position="356"/>
    </location>
</feature>
<feature type="modified residue" description="Phosphoserine" evidence="20">
    <location>
        <position position="358"/>
    </location>
</feature>
<feature type="modified residue" description="Phosphoserine" evidence="20">
    <location>
        <position position="695"/>
    </location>
</feature>
<feature type="modified residue" description="Phosphotyrosine; by NTRK2" evidence="10">
    <location>
        <position position="829"/>
    </location>
</feature>
<feature type="modified residue" description="Phosphotyrosine" evidence="19">
    <location>
        <position position="1323"/>
    </location>
</feature>
<feature type="modified residue" description="Phosphoserine" evidence="20">
    <location>
        <position position="1519"/>
    </location>
</feature>
<feature type="lipid moiety-binding region" description="N-myristoyl glycine" evidence="3">
    <location>
        <position position="2"/>
    </location>
</feature>
<feature type="cross-link" description="Glycyl lysine isopeptide (Lys-Gly) (interchain with G-Cter in ubiquitin)" evidence="2">
    <location>
        <position position="1404"/>
    </location>
</feature>
<feature type="cross-link" description="Glycyl lysine isopeptide (Lys-Gly) (interchain with G-Cter in ubiquitin)" evidence="2">
    <location>
        <position position="1420"/>
    </location>
</feature>
<feature type="mutagenesis site" description="Reduces phosphatidylinositol phosphate binding." evidence="11">
    <original>RR</original>
    <variation>AA</variation>
    <location>
        <begin position="459"/>
        <end position="460"/>
    </location>
</feature>
<feature type="mutagenesis site" description="Reduces PARD3 binding; when associated with A-645.">
    <original>R</original>
    <variation>A</variation>
    <location>
        <position position="622"/>
    </location>
</feature>
<feature type="mutagenesis site" description="Reduces PARD3 binding; when associated with A-622.">
    <original>R</original>
    <variation>A</variation>
    <location>
        <position position="645"/>
    </location>
</feature>
<feature type="helix" evidence="21">
    <location>
        <begin position="1037"/>
        <end position="1065"/>
    </location>
</feature>
<feature type="helix" evidence="21">
    <location>
        <begin position="1067"/>
        <end position="1071"/>
    </location>
</feature>
<feature type="strand" evidence="21">
    <location>
        <begin position="1073"/>
        <end position="1076"/>
    </location>
</feature>
<feature type="helix" evidence="21">
    <location>
        <begin position="1078"/>
        <end position="1085"/>
    </location>
</feature>
<feature type="helix" evidence="21">
    <location>
        <begin position="1088"/>
        <end position="1106"/>
    </location>
</feature>
<feature type="helix" evidence="21">
    <location>
        <begin position="1112"/>
        <end position="1114"/>
    </location>
</feature>
<feature type="helix" evidence="21">
    <location>
        <begin position="1118"/>
        <end position="1121"/>
    </location>
</feature>
<feature type="helix" evidence="21">
    <location>
        <begin position="1122"/>
        <end position="1135"/>
    </location>
</feature>
<feature type="helix" evidence="21">
    <location>
        <begin position="1138"/>
        <end position="1141"/>
    </location>
</feature>
<feature type="helix" evidence="21">
    <location>
        <begin position="1142"/>
        <end position="1148"/>
    </location>
</feature>
<feature type="turn" evidence="21">
    <location>
        <begin position="1149"/>
        <end position="1151"/>
    </location>
</feature>
<feature type="helix" evidence="21">
    <location>
        <begin position="1152"/>
        <end position="1156"/>
    </location>
</feature>
<feature type="turn" evidence="21">
    <location>
        <begin position="1157"/>
        <end position="1161"/>
    </location>
</feature>
<feature type="helix" evidence="21">
    <location>
        <begin position="1163"/>
        <end position="1172"/>
    </location>
</feature>
<feature type="helix" evidence="21">
    <location>
        <begin position="1178"/>
        <end position="1180"/>
    </location>
</feature>
<feature type="helix" evidence="21">
    <location>
        <begin position="1182"/>
        <end position="1185"/>
    </location>
</feature>
<feature type="helix" evidence="21">
    <location>
        <begin position="1188"/>
        <end position="1193"/>
    </location>
</feature>
<feature type="helix" evidence="21">
    <location>
        <begin position="1196"/>
        <end position="1205"/>
    </location>
</feature>
<feature type="helix" evidence="21">
    <location>
        <begin position="1212"/>
        <end position="1249"/>
    </location>
</feature>
<feature type="helix" evidence="21">
    <location>
        <begin position="1264"/>
        <end position="1266"/>
    </location>
</feature>
<feature type="strand" evidence="21">
    <location>
        <begin position="1267"/>
        <end position="1277"/>
    </location>
</feature>
<feature type="helix" evidence="21">
    <location>
        <begin position="1280"/>
        <end position="1283"/>
    </location>
</feature>
<feature type="strand" evidence="21">
    <location>
        <begin position="1290"/>
        <end position="1296"/>
    </location>
</feature>
<feature type="strand" evidence="21">
    <location>
        <begin position="1299"/>
        <end position="1304"/>
    </location>
</feature>
<feature type="turn" evidence="21">
    <location>
        <begin position="1318"/>
        <end position="1321"/>
    </location>
</feature>
<feature type="strand" evidence="21">
    <location>
        <begin position="1332"/>
        <end position="1336"/>
    </location>
</feature>
<feature type="helix" evidence="21">
    <location>
        <begin position="1337"/>
        <end position="1339"/>
    </location>
</feature>
<feature type="strand" evidence="21">
    <location>
        <begin position="1340"/>
        <end position="1343"/>
    </location>
</feature>
<feature type="turn" evidence="21">
    <location>
        <begin position="1348"/>
        <end position="1351"/>
    </location>
</feature>
<feature type="strand" evidence="21">
    <location>
        <begin position="1355"/>
        <end position="1360"/>
    </location>
</feature>
<feature type="helix" evidence="21">
    <location>
        <begin position="1365"/>
        <end position="1367"/>
    </location>
</feature>
<feature type="strand" evidence="21">
    <location>
        <begin position="1371"/>
        <end position="1379"/>
    </location>
</feature>
<feature type="helix" evidence="21">
    <location>
        <begin position="1380"/>
        <end position="1400"/>
    </location>
</feature>
<feature type="helix" evidence="22">
    <location>
        <begin position="1546"/>
        <end position="1549"/>
    </location>
</feature>
<feature type="helix" evidence="22">
    <location>
        <begin position="1550"/>
        <end position="1552"/>
    </location>
</feature>
<name>TIAM1_MOUSE</name>
<reference key="1">
    <citation type="journal article" date="1994" name="Cell">
        <title>Identification of an invasion-inducing gene, Tiam-1, that encodes a protein with homology to GDP-GTP exchangers for Rho-like proteins.</title>
        <authorList>
            <person name="Habets G.G.M."/>
            <person name="Scholtes E.H.M."/>
            <person name="Zuydgeest D."/>
            <person name="van der Kammen R.A."/>
            <person name="Stam J.C."/>
            <person name="Berns A."/>
            <person name="Collard J.G."/>
        </authorList>
    </citation>
    <scope>NUCLEOTIDE SEQUENCE [MRNA]</scope>
    <source>
        <strain>BALB/cJ</strain>
        <tissue>Brain</tissue>
    </source>
</reference>
<reference key="2">
    <citation type="journal article" date="2005" name="Nat. Biotechnol.">
        <title>Immunoaffinity profiling of tyrosine phosphorylation in cancer cells.</title>
        <authorList>
            <person name="Rush J."/>
            <person name="Moritz A."/>
            <person name="Lee K.A."/>
            <person name="Guo A."/>
            <person name="Goss V.L."/>
            <person name="Spek E.J."/>
            <person name="Zhang H."/>
            <person name="Zha X.-M."/>
            <person name="Polakiewicz R.D."/>
            <person name="Comb M.J."/>
        </authorList>
    </citation>
    <scope>IDENTIFICATION BY MASS SPECTROMETRY [LARGE SCALE ANALYSIS]</scope>
</reference>
<reference key="3">
    <citation type="journal article" date="2006" name="Mol. Cell. Proteomics">
        <title>Comprehensive identification of phosphorylation sites in postsynaptic density preparations.</title>
        <authorList>
            <person name="Trinidad J.C."/>
            <person name="Specht C.G."/>
            <person name="Thalhammer A."/>
            <person name="Schoepfer R."/>
            <person name="Burlingame A.L."/>
        </authorList>
    </citation>
    <scope>PHOSPHORYLATION [LARGE SCALE ANALYSIS] AT SER-231</scope>
    <scope>IDENTIFICATION BY MASS SPECTROMETRY [LARGE SCALE ANALYSIS]</scope>
    <source>
        <tissue>Brain</tissue>
    </source>
</reference>
<reference key="4">
    <citation type="journal article" date="2006" name="Proc. Natl. Acad. Sci. U.S.A.">
        <title>TrkB binds and tyrosine-phosphorylates Tiam1, leading to activation of Rac1 and induction of changes in cellular morphology.</title>
        <authorList>
            <person name="Miyamoto Y."/>
            <person name="Yamauchi J."/>
            <person name="Tanoue A."/>
            <person name="Wu C."/>
            <person name="Mobley W.C."/>
        </authorList>
    </citation>
    <scope>INTERACTION WITH NTRK2</scope>
    <scope>PHOSPHORYLATION AT TYR-829 BY NTRK2</scope>
</reference>
<reference key="5">
    <citation type="journal article" date="2007" name="J. Biol. Chem.">
        <title>Non-canonical interaction of phosphoinositides with pleckstrin homology domains of Tiam1 and ArhGAP9.</title>
        <authorList>
            <person name="Ceccarelli D.F."/>
            <person name="Blasutig I.M."/>
            <person name="Goudreault M."/>
            <person name="Li Z."/>
            <person name="Ruston J."/>
            <person name="Pawson T."/>
            <person name="Sicheri F."/>
        </authorList>
    </citation>
    <scope>SUBCELLULAR LOCATION</scope>
    <scope>DOMAIN</scope>
    <scope>MUTAGENESIS OF 459-ARG-ARG-460</scope>
    <scope>LIPID-BINDING</scope>
</reference>
<reference key="6">
    <citation type="journal article" date="2007" name="J. Immunol.">
        <title>Quantitative time-resolved phosphoproteomic analysis of mast cell signaling.</title>
        <authorList>
            <person name="Cao L."/>
            <person name="Yu K."/>
            <person name="Banh C."/>
            <person name="Nguyen V."/>
            <person name="Ritz A."/>
            <person name="Raphael B.J."/>
            <person name="Kawakami Y."/>
            <person name="Kawakami T."/>
            <person name="Salomon A.R."/>
        </authorList>
    </citation>
    <scope>PHOSPHORYLATION [LARGE SCALE ANALYSIS] AT TYR-1323</scope>
    <scope>IDENTIFICATION BY MASS SPECTROMETRY [LARGE SCALE ANALYSIS]</scope>
    <source>
        <tissue>Mast cell</tissue>
    </source>
</reference>
<reference key="7">
    <citation type="journal article" date="2010" name="Cell">
        <title>A tissue-specific atlas of mouse protein phosphorylation and expression.</title>
        <authorList>
            <person name="Huttlin E.L."/>
            <person name="Jedrychowski M.P."/>
            <person name="Elias J.E."/>
            <person name="Goswami T."/>
            <person name="Rad R."/>
            <person name="Beausoleil S.A."/>
            <person name="Villen J."/>
            <person name="Haas W."/>
            <person name="Sowa M.E."/>
            <person name="Gygi S.P."/>
        </authorList>
    </citation>
    <scope>PHOSPHORYLATION [LARGE SCALE ANALYSIS] AT SER-231; SER-356; SER-358; SER-695 AND SER-1519</scope>
    <scope>IDENTIFICATION BY MASS SPECTROMETRY [LARGE SCALE ANALYSIS]</scope>
    <source>
        <tissue>Brain</tissue>
        <tissue>Lung</tissue>
        <tissue>Testis</tissue>
    </source>
</reference>
<reference key="8">
    <citation type="journal article" date="2010" name="Mol. Cells">
        <title>EphA8-ephrinA5 signaling and clathrin-mediated endocytosis is regulated by Tiam-1, a Rac-specific guanine nucleotide exchange factor.</title>
        <authorList>
            <person name="Yoo S."/>
            <person name="Shin J."/>
            <person name="Park S."/>
        </authorList>
    </citation>
    <scope>INTERACTION WITH EPHA8</scope>
</reference>
<reference key="9">
    <citation type="journal article" date="2000" name="Nature">
        <title>Crystal structure of Rac1 in complex with the guanine nucleotide exchange region of Tiam1.</title>
        <authorList>
            <person name="Worthylake D.K."/>
            <person name="Rossman K.L."/>
            <person name="Sondek J."/>
        </authorList>
    </citation>
    <scope>X-RAY CRYSTALLOGRAPHY (2.8 ANGSTROMS) OF 1033-1406 IN COMPLEX WITH RAC1</scope>
</reference>
<reference key="10">
    <citation type="journal article" date="2010" name="EMBO J.">
        <title>The PHCCEx domain of Tiam1/2 is a novel protein- and membrane-binding module.</title>
        <authorList>
            <person name="Terawaki S."/>
            <person name="Kitano K."/>
            <person name="Mori T."/>
            <person name="Zhai Y."/>
            <person name="Higuchi Y."/>
            <person name="Itoh N."/>
            <person name="Watanabe T."/>
            <person name="Kaibuchi K."/>
            <person name="Hakoshima T."/>
        </authorList>
    </citation>
    <scope>X-RAY CRYSTALLOGRAPHY (4.5 ANGSTROMS) OF 429-702</scope>
    <scope>INTERACTION WITH CD44; PARD3 AND MAPK8IP2</scope>
</reference>
<accession>Q60610</accession>
<proteinExistence type="evidence at protein level"/>
<protein>
    <recommendedName>
        <fullName evidence="15">Rho guanine nucleotide exchange factor TIAM1</fullName>
    </recommendedName>
    <alternativeName>
        <fullName evidence="16">T-lymphoma invasion and metastasis-inducing protein 1</fullName>
        <shortName evidence="14">TIAM-1</shortName>
    </alternativeName>
</protein>
<comment type="function">
    <text evidence="2">Guanyl-nucleotide exchange factor that activates RHO-like proteins and connects extracellular signals to cytoskeletal activities. Activates RAC1, CDC42, and to a lesser extent RHOA and their downstream signaling to regulate processes like cell adhesion and cell migration.</text>
</comment>
<comment type="subunit">
    <text evidence="1 9 10 12 13">Component of the Par polarity complex, composed of at least phosphorylated PRKCZ, PARD3 and TIAM1 (By similarity). Interacts with BAIAP2. Interacts (via PDZ domain) with CNTNAP4, SDC1 and SDC3 (via C-terminus) (By similarity). Interacts with CD44, PARD3 and MAPK8IP2. Interacts with EPHA8; regulates clathrin-mediated endocytosis of EPHA8. Interacts with NTRK2; mediates the activation of RAC1 by BDNF.</text>
</comment>
<comment type="interaction">
    <interactant intactId="EBI-1030321">
        <id>Q60610</id>
    </interactant>
    <interactant intactId="EBI-7565891">
        <id>P15379</id>
        <label>Cd44</label>
    </interactant>
    <organismsDiffer>false</organismsDiffer>
    <experiments>8</experiments>
</comment>
<comment type="subcellular location">
    <subcellularLocation>
        <location evidence="11">Cell junction</location>
    </subcellularLocation>
    <subcellularLocation>
        <location evidence="11">Cell membrane</location>
        <topology evidence="11">Peripheral membrane protein</topology>
        <orientation evidence="11">Cytoplasmic side</orientation>
    </subcellularLocation>
    <text evidence="1">Presence of KRIT1, CDH5 and RAP1B is required for its localization to the cell junction (By similarity). Detected at the boundary between cells with actin-rich protrusions.</text>
</comment>
<comment type="tissue specificity">
    <text>Highly expressed in brain and testis and at low or moderate levels in almost all other normal tissues. Found in virtually all analyzed tumor cell lines including B- and T-lymphomas, neuroblastomas, melanomas and carcinomas.</text>
</comment>
<comment type="domain">
    <text evidence="11">The first PH domain mediates interaction with membranes enriched in phosphoinositides.</text>
</comment>
<comment type="PTM">
    <text evidence="2">Ubiquitinated. Undergoes 'Lys-48' ubiquitination at Lys-1404 and Lys-1420 by a CUL3(KBTBD6/7) E3 ubiquitin ligase complex composed of CUL3, RBX1, KBTBD6 and KBTBD7. 'Lys-48' ubiquitination at Lys-1404 and Lys-1420 triggers proteasomal degradation. Ubiquitination at Lys-1404 and Lys-1420 by CUL3(KBTBD6/7) also requires the membrane-associated protein GABARAP and may therefore be spatially restricted within the cell.</text>
</comment>
<comment type="similarity">
    <text evidence="15">Belongs to the TIAM family.</text>
</comment>
<dbReference type="EMBL" id="U05245">
    <property type="protein sequence ID" value="AAA18830.1"/>
    <property type="molecule type" value="mRNA"/>
</dbReference>
<dbReference type="CCDS" id="CCDS28314.1"/>
<dbReference type="PIR" id="A54146">
    <property type="entry name" value="A54146"/>
</dbReference>
<dbReference type="PDB" id="1FOE">
    <property type="method" value="X-ray"/>
    <property type="resolution" value="2.80 A"/>
    <property type="chains" value="A/C/E/G=1033-1406"/>
</dbReference>
<dbReference type="PDB" id="3A8N">
    <property type="method" value="X-ray"/>
    <property type="resolution" value="4.50 A"/>
    <property type="chains" value="A=429-702"/>
</dbReference>
<dbReference type="PDB" id="7UIQ">
    <property type="method" value="X-ray"/>
    <property type="resolution" value="3.11 A"/>
    <property type="chains" value="C/D=1541-1559"/>
</dbReference>
<dbReference type="PDB" id="7UIR">
    <property type="method" value="X-ray"/>
    <property type="resolution" value="3.10 A"/>
    <property type="chains" value="C/D=1541-1559"/>
</dbReference>
<dbReference type="PDBsum" id="1FOE"/>
<dbReference type="PDBsum" id="3A8N"/>
<dbReference type="PDBsum" id="7UIQ"/>
<dbReference type="PDBsum" id="7UIR"/>
<dbReference type="SMR" id="Q60610"/>
<dbReference type="CORUM" id="Q60610"/>
<dbReference type="DIP" id="DIP-37821N"/>
<dbReference type="FunCoup" id="Q60610">
    <property type="interactions" value="321"/>
</dbReference>
<dbReference type="IntAct" id="Q60610">
    <property type="interactions" value="11"/>
</dbReference>
<dbReference type="MINT" id="Q60610"/>
<dbReference type="STRING" id="10090.ENSMUSP00000002588"/>
<dbReference type="GlyGen" id="Q60610">
    <property type="glycosylation" value="1 site"/>
</dbReference>
<dbReference type="iPTMnet" id="Q60610"/>
<dbReference type="PhosphoSitePlus" id="Q60610"/>
<dbReference type="jPOST" id="Q60610"/>
<dbReference type="PaxDb" id="10090-ENSMUSP00000126020"/>
<dbReference type="ProteomicsDB" id="262778"/>
<dbReference type="Pumba" id="Q60610"/>
<dbReference type="ABCD" id="Q60610">
    <property type="antibodies" value="1 sequenced antibody"/>
</dbReference>
<dbReference type="AGR" id="MGI:103306"/>
<dbReference type="MGI" id="MGI:103306">
    <property type="gene designation" value="Tiam1"/>
</dbReference>
<dbReference type="eggNOG" id="KOG3519">
    <property type="taxonomic scope" value="Eukaryota"/>
</dbReference>
<dbReference type="InParanoid" id="Q60610"/>
<dbReference type="PhylomeDB" id="Q60610"/>
<dbReference type="Reactome" id="R-MMU-193648">
    <property type="pathway name" value="NRAGE signals death through JNK"/>
</dbReference>
<dbReference type="Reactome" id="R-MMU-3928662">
    <property type="pathway name" value="EPHB-mediated forward signaling"/>
</dbReference>
<dbReference type="Reactome" id="R-MMU-3928665">
    <property type="pathway name" value="EPH-ephrin mediated repulsion of cells"/>
</dbReference>
<dbReference type="Reactome" id="R-MMU-416482">
    <property type="pathway name" value="G alpha (12/13) signalling events"/>
</dbReference>
<dbReference type="Reactome" id="R-MMU-8980692">
    <property type="pathway name" value="RHOA GTPase cycle"/>
</dbReference>
<dbReference type="Reactome" id="R-MMU-9013148">
    <property type="pathway name" value="CDC42 GTPase cycle"/>
</dbReference>
<dbReference type="Reactome" id="R-MMU-9013149">
    <property type="pathway name" value="RAC1 GTPase cycle"/>
</dbReference>
<dbReference type="Reactome" id="R-MMU-9013404">
    <property type="pathway name" value="RAC2 GTPase cycle"/>
</dbReference>
<dbReference type="Reactome" id="R-MMU-9013423">
    <property type="pathway name" value="RAC3 GTPase cycle"/>
</dbReference>
<dbReference type="CD-CODE" id="01CA17F3">
    <property type="entry name" value="Centrosome"/>
</dbReference>
<dbReference type="ChiTaRS" id="Tiam1">
    <property type="organism name" value="mouse"/>
</dbReference>
<dbReference type="EvolutionaryTrace" id="Q60610"/>
<dbReference type="PRO" id="PR:Q60610"/>
<dbReference type="Proteomes" id="UP000000589">
    <property type="component" value="Unplaced"/>
</dbReference>
<dbReference type="RNAct" id="Q60610">
    <property type="molecule type" value="protein"/>
</dbReference>
<dbReference type="GO" id="GO:0044291">
    <property type="term" value="C:cell-cell contact zone"/>
    <property type="evidence" value="ECO:0000250"/>
    <property type="project" value="UniProtKB"/>
</dbReference>
<dbReference type="GO" id="GO:0005911">
    <property type="term" value="C:cell-cell junction"/>
    <property type="evidence" value="ECO:0000250"/>
    <property type="project" value="UniProtKB"/>
</dbReference>
<dbReference type="GO" id="GO:0005829">
    <property type="term" value="C:cytosol"/>
    <property type="evidence" value="ECO:0000304"/>
    <property type="project" value="Reactome"/>
</dbReference>
<dbReference type="GO" id="GO:0060091">
    <property type="term" value="C:kinocilium"/>
    <property type="evidence" value="ECO:0000314"/>
    <property type="project" value="MGI"/>
</dbReference>
<dbReference type="GO" id="GO:0000242">
    <property type="term" value="C:pericentriolar material"/>
    <property type="evidence" value="ECO:0000314"/>
    <property type="project" value="MGI"/>
</dbReference>
<dbReference type="GO" id="GO:0005886">
    <property type="term" value="C:plasma membrane"/>
    <property type="evidence" value="ECO:0000314"/>
    <property type="project" value="MGI"/>
</dbReference>
<dbReference type="GO" id="GO:0046875">
    <property type="term" value="F:ephrin receptor binding"/>
    <property type="evidence" value="ECO:0000353"/>
    <property type="project" value="MGI"/>
</dbReference>
<dbReference type="GO" id="GO:0005085">
    <property type="term" value="F:guanyl-nucleotide exchange factor activity"/>
    <property type="evidence" value="ECO:0000314"/>
    <property type="project" value="MGI"/>
</dbReference>
<dbReference type="GO" id="GO:0008017">
    <property type="term" value="F:microtubule binding"/>
    <property type="evidence" value="ECO:0000314"/>
    <property type="project" value="MGI"/>
</dbReference>
<dbReference type="GO" id="GO:0005543">
    <property type="term" value="F:phospholipid binding"/>
    <property type="evidence" value="ECO:0000314"/>
    <property type="project" value="MGI"/>
</dbReference>
<dbReference type="GO" id="GO:0030971">
    <property type="term" value="F:receptor tyrosine kinase binding"/>
    <property type="evidence" value="ECO:0000353"/>
    <property type="project" value="UniProtKB"/>
</dbReference>
<dbReference type="GO" id="GO:0090630">
    <property type="term" value="P:activation of GTPase activity"/>
    <property type="evidence" value="ECO:0000315"/>
    <property type="project" value="ParkinsonsUK-UCL"/>
</dbReference>
<dbReference type="GO" id="GO:0031547">
    <property type="term" value="P:brain-derived neurotrophic factor receptor signaling pathway"/>
    <property type="evidence" value="ECO:0000314"/>
    <property type="project" value="UniProtKB"/>
</dbReference>
<dbReference type="GO" id="GO:0016477">
    <property type="term" value="P:cell migration"/>
    <property type="evidence" value="ECO:0000250"/>
    <property type="project" value="UniProtKB"/>
</dbReference>
<dbReference type="GO" id="GO:0007160">
    <property type="term" value="P:cell-matrix adhesion"/>
    <property type="evidence" value="ECO:0000250"/>
    <property type="project" value="UniProtKB"/>
</dbReference>
<dbReference type="GO" id="GO:0048013">
    <property type="term" value="P:ephrin receptor signaling pathway"/>
    <property type="evidence" value="ECO:0000314"/>
    <property type="project" value="MGI"/>
</dbReference>
<dbReference type="GO" id="GO:0050772">
    <property type="term" value="P:positive regulation of axonogenesis"/>
    <property type="evidence" value="ECO:0000315"/>
    <property type="project" value="MGI"/>
</dbReference>
<dbReference type="GO" id="GO:0010976">
    <property type="term" value="P:positive regulation of neuron projection development"/>
    <property type="evidence" value="ECO:0000314"/>
    <property type="project" value="UniProtKB"/>
</dbReference>
<dbReference type="GO" id="GO:0016601">
    <property type="term" value="P:Rac protein signal transduction"/>
    <property type="evidence" value="ECO:0000250"/>
    <property type="project" value="UniProtKB"/>
</dbReference>
<dbReference type="GO" id="GO:1904338">
    <property type="term" value="P:regulation of dopaminergic neuron differentiation"/>
    <property type="evidence" value="ECO:0000315"/>
    <property type="project" value="ParkinsonsUK-UCL"/>
</dbReference>
<dbReference type="GO" id="GO:0043087">
    <property type="term" value="P:regulation of GTPase activity"/>
    <property type="evidence" value="ECO:0000314"/>
    <property type="project" value="UniProtKB"/>
</dbReference>
<dbReference type="GO" id="GO:2000050">
    <property type="term" value="P:regulation of non-canonical Wnt signaling pathway"/>
    <property type="evidence" value="ECO:0000316"/>
    <property type="project" value="ParkinsonsUK-UCL"/>
</dbReference>
<dbReference type="GO" id="GO:0007264">
    <property type="term" value="P:small GTPase-mediated signal transduction"/>
    <property type="evidence" value="ECO:0000314"/>
    <property type="project" value="MGI"/>
</dbReference>
<dbReference type="CDD" id="cd01230">
    <property type="entry name" value="PH1_Tiam1_2"/>
    <property type="match status" value="1"/>
</dbReference>
<dbReference type="CDD" id="cd01255">
    <property type="entry name" value="PH2_Tiam1_2"/>
    <property type="match status" value="1"/>
</dbReference>
<dbReference type="CDD" id="cd00160">
    <property type="entry name" value="RhoGEF"/>
    <property type="match status" value="1"/>
</dbReference>
<dbReference type="FunFam" id="1.20.900.10:FF:000012">
    <property type="entry name" value="T cell lymphoma invasion and metastasis 1"/>
    <property type="match status" value="1"/>
</dbReference>
<dbReference type="FunFam" id="2.30.29.30:FF:000065">
    <property type="entry name" value="T cell lymphoma invasion and metastasis 1"/>
    <property type="match status" value="1"/>
</dbReference>
<dbReference type="FunFam" id="2.30.29.30:FF:000121">
    <property type="entry name" value="T cell lymphoma invasion and metastasis 1"/>
    <property type="match status" value="1"/>
</dbReference>
<dbReference type="Gene3D" id="2.30.42.10">
    <property type="match status" value="1"/>
</dbReference>
<dbReference type="Gene3D" id="6.10.140.680">
    <property type="match status" value="1"/>
</dbReference>
<dbReference type="Gene3D" id="1.20.900.10">
    <property type="entry name" value="Dbl homology (DH) domain"/>
    <property type="match status" value="1"/>
</dbReference>
<dbReference type="Gene3D" id="2.30.29.30">
    <property type="entry name" value="Pleckstrin-homology domain (PH domain)/Phosphotyrosine-binding domain (PTB)"/>
    <property type="match status" value="2"/>
</dbReference>
<dbReference type="InterPro" id="IPR035899">
    <property type="entry name" value="DBL_dom_sf"/>
</dbReference>
<dbReference type="InterPro" id="IPR000219">
    <property type="entry name" value="DH_dom"/>
</dbReference>
<dbReference type="InterPro" id="IPR001331">
    <property type="entry name" value="GDS_CDC24_CS"/>
</dbReference>
<dbReference type="InterPro" id="IPR001478">
    <property type="entry name" value="PDZ"/>
</dbReference>
<dbReference type="InterPro" id="IPR036034">
    <property type="entry name" value="PDZ_sf"/>
</dbReference>
<dbReference type="InterPro" id="IPR011993">
    <property type="entry name" value="PH-like_dom_sf"/>
</dbReference>
<dbReference type="InterPro" id="IPR001849">
    <property type="entry name" value="PH_domain"/>
</dbReference>
<dbReference type="InterPro" id="IPR055230">
    <property type="entry name" value="PH_Tiam1/2"/>
</dbReference>
<dbReference type="InterPro" id="IPR003116">
    <property type="entry name" value="RBD_dom"/>
</dbReference>
<dbReference type="InterPro" id="IPR043537">
    <property type="entry name" value="Tiam1/Tiam2/Sif"/>
</dbReference>
<dbReference type="InterPro" id="IPR040655">
    <property type="entry name" value="TIAM1_CC-Ex"/>
</dbReference>
<dbReference type="PANTHER" id="PTHR46001:SF1">
    <property type="entry name" value="RHO GUANINE NUCLEOTIDE EXCHANGE FACTOR TIAM1"/>
    <property type="match status" value="1"/>
</dbReference>
<dbReference type="PANTHER" id="PTHR46001">
    <property type="entry name" value="TIAM (MAMMALIAN TUMOR INVASION AND METASTASIS FACTOR) HOMOLOG"/>
    <property type="match status" value="1"/>
</dbReference>
<dbReference type="Pfam" id="PF00595">
    <property type="entry name" value="PDZ"/>
    <property type="match status" value="1"/>
</dbReference>
<dbReference type="Pfam" id="PF00169">
    <property type="entry name" value="PH"/>
    <property type="match status" value="1"/>
</dbReference>
<dbReference type="Pfam" id="PF23014">
    <property type="entry name" value="PH_Tiam1"/>
    <property type="match status" value="1"/>
</dbReference>
<dbReference type="Pfam" id="PF02196">
    <property type="entry name" value="RBD"/>
    <property type="match status" value="1"/>
</dbReference>
<dbReference type="Pfam" id="PF00621">
    <property type="entry name" value="RhoGEF"/>
    <property type="match status" value="1"/>
</dbReference>
<dbReference type="Pfam" id="PF18385">
    <property type="entry name" value="Tiam_CC_Ex"/>
    <property type="match status" value="1"/>
</dbReference>
<dbReference type="SMART" id="SM00228">
    <property type="entry name" value="PDZ"/>
    <property type="match status" value="1"/>
</dbReference>
<dbReference type="SMART" id="SM00233">
    <property type="entry name" value="PH"/>
    <property type="match status" value="2"/>
</dbReference>
<dbReference type="SMART" id="SM00455">
    <property type="entry name" value="RBD"/>
    <property type="match status" value="1"/>
</dbReference>
<dbReference type="SMART" id="SM00325">
    <property type="entry name" value="RhoGEF"/>
    <property type="match status" value="1"/>
</dbReference>
<dbReference type="SUPFAM" id="SSF48065">
    <property type="entry name" value="DBL homology domain (DH-domain)"/>
    <property type="match status" value="1"/>
</dbReference>
<dbReference type="SUPFAM" id="SSF50156">
    <property type="entry name" value="PDZ domain-like"/>
    <property type="match status" value="1"/>
</dbReference>
<dbReference type="SUPFAM" id="SSF50729">
    <property type="entry name" value="PH domain-like"/>
    <property type="match status" value="2"/>
</dbReference>
<dbReference type="PROSITE" id="PS00741">
    <property type="entry name" value="DH_1"/>
    <property type="match status" value="1"/>
</dbReference>
<dbReference type="PROSITE" id="PS50010">
    <property type="entry name" value="DH_2"/>
    <property type="match status" value="1"/>
</dbReference>
<dbReference type="PROSITE" id="PS50106">
    <property type="entry name" value="PDZ"/>
    <property type="match status" value="1"/>
</dbReference>
<dbReference type="PROSITE" id="PS50003">
    <property type="entry name" value="PH_DOMAIN"/>
    <property type="match status" value="1"/>
</dbReference>
<dbReference type="PROSITE" id="PS50898">
    <property type="entry name" value="RBD"/>
    <property type="match status" value="1"/>
</dbReference>
<keyword id="KW-0002">3D-structure</keyword>
<keyword id="KW-0965">Cell junction</keyword>
<keyword id="KW-1003">Cell membrane</keyword>
<keyword id="KW-0344">Guanine-nucleotide releasing factor</keyword>
<keyword id="KW-1017">Isopeptide bond</keyword>
<keyword id="KW-0446">Lipid-binding</keyword>
<keyword id="KW-0449">Lipoprotein</keyword>
<keyword id="KW-0472">Membrane</keyword>
<keyword id="KW-0519">Myristate</keyword>
<keyword id="KW-0597">Phosphoprotein</keyword>
<keyword id="KW-1185">Reference proteome</keyword>
<keyword id="KW-0677">Repeat</keyword>
<keyword id="KW-0832">Ubl conjugation</keyword>
<sequence>MGNAESQNVDHEFYGEKHASLGRKHTSRSLRLSHKTRRTRHASSGKAIHRNSEVSTRSSSTPSIPQSLAENGLEPFSQEGALDDFGDPIWVDRVDMGLRPVSYTDSSVTPSVDGSIVLTAASVQSMPDSEESRLYGDDATYLAEGGRRQCPYTSNGPTFMETASFKKKRSKSADIWREDSLEFSLSDLSQEHLTSNEEILGSAEEKDCEEARGMETEASPRQLSTCQRANSLGDLYAQKNSGVKANGGPRNRFSSYCRNLVSDIPDLAKHKMPPAAAEETPPYSNYNTLPCRKSHCLSEGATNPQISLSKSMQGRRAKTTQDVNTGEGSEFADSGIEGATTDTDLLSRRSNATNSSYSPPTGRAFVGSDSGSSSTGDRARQGVYENFRRELEMSTTNSESLEEAGSAHSDEQSSGTLSSPGQSDILLTAAQGTVRKAGALAVKNFLVHKKNKKVESATRRKWKHYWVSLKGCTLFFYETDGRSGIDHNSVPKHAVWVENSIVQAVPEHPKKDFVFCLSNSLGDAFLFQTTSQTELENWITAIHSACAAAVARHHHKEDTLRLLKSEIKKLEQKIDMDEKMKKMGEMQLSSVTDSKKKKTILDQIFVWEQNLEQFQMDLFRFRCYLASLQGGELPNPKRLLAFASRPTKVAMGRLGIFSVSSFHALVAARTGEIGVRRRTQAMSRSASKRRSRFSSLWGLDTTSKKKQGRPTINQVFGEGTDAVKRSLEGIFDDTVPDGKREKEVVLPSVHQHNPDCDIWVHEYFTPSWFCLPNNQPALTVVRPGDTARDTLELICKTHQLDHSAHYLRLKFLMENRVQFYIPQPEEDIYELLYKEIEICPKVTQNIHIEKSDAAADNYGFLLSSVDEDGIRRLYVNSVKETGLASKKGLKAGDEILEINNRAAGTLNSSMLKDFLSQPSLGLLVRTYPEPEGGVELLENPPHRVDGPVDLGESPLAFLTSNPGHSLSSEQGSSAETAPEEGEGPDLESSDETDHSSKSTEQVAAFCRSLHEMSPSDSSPSPQDATSPQLATTRQLSDADKLRKVICELLETERTYVKDLNCLMERYLKPLQKETFLTQDELDVLFGNLTEMVEFQVEFLKTLEDGVRLVPDLEKLEKVDQFKKVLFSLGGSFLYYADRFKLYSAFCASHTKVPKVLVKAKTDTAFKAFLDAQNPRQQHSSTLESYLIKPIQRVLKYPLLLRELFALTDAESEEHYHLDVAIKTMNKVASHINEMQKIHEEFGAVFDQLIAEQTGEKKEVADLSMGDLLLHTSVIWLNPPASLGKWKKEPELAAFVFKTAVVLVYKDGSKQKKKLVGSHRLSIYEEWDPFRFRHMIPTEALQVRALPSADAEANAVCEIVHVKSESEGRPERVFHLCCSSPESRKDFLKSVHSILRDKHRRQLLKTESLPSAQQYVPFGGKRLCALKGARPAMSRAVSAPSKSLGRRRRRLARNRFTIDSDAISASSPEKEPQQPAGGGDTDRWVEEQFDLAQYEEQDDIKETDILSDDDEFCESLKGASVDRDLQEQLQAASISQRARGRRTLDSHASRMTQLKKQAALSGINGGLESASEEVIWVRREDFAPSRKLNTEI</sequence>
<organism>
    <name type="scientific">Mus musculus</name>
    <name type="common">Mouse</name>
    <dbReference type="NCBI Taxonomy" id="10090"/>
    <lineage>
        <taxon>Eukaryota</taxon>
        <taxon>Metazoa</taxon>
        <taxon>Chordata</taxon>
        <taxon>Craniata</taxon>
        <taxon>Vertebrata</taxon>
        <taxon>Euteleostomi</taxon>
        <taxon>Mammalia</taxon>
        <taxon>Eutheria</taxon>
        <taxon>Euarchontoglires</taxon>
        <taxon>Glires</taxon>
        <taxon>Rodentia</taxon>
        <taxon>Myomorpha</taxon>
        <taxon>Muroidea</taxon>
        <taxon>Muridae</taxon>
        <taxon>Murinae</taxon>
        <taxon>Mus</taxon>
        <taxon>Mus</taxon>
    </lineage>
</organism>